<name>BKRF4_EBVG</name>
<reference key="1">
    <citation type="journal article" date="2005" name="J. Virol.">
        <title>Genomic sequence analysis of Epstein-Barr virus strain GD1 from a nasopharyngeal carcinoma patient.</title>
        <authorList>
            <person name="Zeng M.-S."/>
            <person name="Li D.-J."/>
            <person name="Liu Q.-L."/>
            <person name="Song L.-B."/>
            <person name="Li M.-Z."/>
            <person name="Zhang R.-H."/>
            <person name="Yu X.-J."/>
            <person name="Wang H.-M."/>
            <person name="Ernberg I."/>
            <person name="Zeng Y.-X."/>
        </authorList>
    </citation>
    <scope>NUCLEOTIDE SEQUENCE [LARGE SCALE GENOMIC DNA]</scope>
</reference>
<organism>
    <name type="scientific">Epstein-Barr virus (strain GD1)</name>
    <name type="common">HHV-4</name>
    <name type="synonym">Human gammaherpesvirus 4</name>
    <dbReference type="NCBI Taxonomy" id="10376"/>
    <lineage>
        <taxon>Viruses</taxon>
        <taxon>Duplodnaviria</taxon>
        <taxon>Heunggongvirae</taxon>
        <taxon>Peploviricota</taxon>
        <taxon>Herviviricetes</taxon>
        <taxon>Herpesvirales</taxon>
        <taxon>Orthoherpesviridae</taxon>
        <taxon>Gammaherpesvirinae</taxon>
        <taxon>Lymphocryptovirus</taxon>
        <taxon>Lymphocryptovirus humangamma4</taxon>
    </lineage>
</organism>
<sequence length="217" mass="23969">MAMFLKSRGVRSCRDRRLLSDEEEETSQSSSYTLGSQASQSIQEEDVSDTDESDYSDEDEEIDLEEEYPSDEDPSEGSDSDPSWHPSDSDESDYSESDEDEATPGSQASRSSRVSPSTQQSSGLTPTPSFSRPRTRAPPRPPAPAPVRGRASAPPRPPAPVPQSTKDKVPNRPTRPVLRGPAPRRPPPPSSPNTYNKHMMETTPPIKGNNNYNWPWL</sequence>
<organismHost>
    <name type="scientific">Homo sapiens</name>
    <name type="common">Human</name>
    <dbReference type="NCBI Taxonomy" id="9606"/>
</organismHost>
<comment type="function">
    <text evidence="1">Histone-binding protein that binds to histones H2A/H2B, H3/H4 and cellular chromatin to overcome the host DNA damage response triggered by the viral genome ends. Interferes with histone ubiquitination and recruitment of repair proteins.</text>
</comment>
<comment type="subunit">
    <text evidence="1">Forms a complex with the host H3/H4 dimer and histone chaperone ASF1. Also forms a complex with host H2A/H2B dimer (By similarity). Interacts (via C-terminus) with BGLF2; this interaction is important for infectious virion production (By similarity).</text>
</comment>
<comment type="subcellular location">
    <subcellularLocation>
        <location evidence="1">Virion tegument</location>
    </subcellularLocation>
    <subcellularLocation>
        <location evidence="1">Host nucleus</location>
    </subcellularLocation>
    <subcellularLocation>
        <location evidence="1">Host cytoplasm</location>
        <location evidence="1">Host perinuclear region</location>
    </subcellularLocation>
</comment>
<comment type="domain">
    <text evidence="1">Binds directly to histones through its N-terminal domain.</text>
</comment>
<comment type="similarity">
    <text evidence="3">Belongs to the lymphocryptovirus BKRF4 family.</text>
</comment>
<dbReference type="EMBL" id="AY961628">
    <property type="protein sequence ID" value="AAY41128.1"/>
    <property type="molecule type" value="Genomic_DNA"/>
</dbReference>
<dbReference type="PDB" id="7WLP">
    <property type="method" value="X-ray"/>
    <property type="resolution" value="2.29 A"/>
    <property type="chains" value="B/C/D=16-102"/>
</dbReference>
<dbReference type="PDBsum" id="7WLP"/>
<dbReference type="SMR" id="Q3KSS1"/>
<dbReference type="Proteomes" id="UP000007641">
    <property type="component" value="Genome"/>
</dbReference>
<dbReference type="GO" id="GO:0042025">
    <property type="term" value="C:host cell nucleus"/>
    <property type="evidence" value="ECO:0007669"/>
    <property type="project" value="UniProtKB-SubCell"/>
</dbReference>
<dbReference type="GO" id="GO:0044220">
    <property type="term" value="C:host cell perinuclear region of cytoplasm"/>
    <property type="evidence" value="ECO:0007669"/>
    <property type="project" value="UniProtKB-SubCell"/>
</dbReference>
<dbReference type="GO" id="GO:0019033">
    <property type="term" value="C:viral tegument"/>
    <property type="evidence" value="ECO:0007669"/>
    <property type="project" value="UniProtKB-SubCell"/>
</dbReference>
<accession>Q3KSS1</accession>
<proteinExistence type="evidence at protein level"/>
<protein>
    <recommendedName>
        <fullName>Tegument protein BKRF4</fullName>
    </recommendedName>
</protein>
<keyword id="KW-0002">3D-structure</keyword>
<keyword id="KW-0143">Chaperone</keyword>
<keyword id="KW-1035">Host cytoplasm</keyword>
<keyword id="KW-1048">Host nucleus</keyword>
<keyword id="KW-0946">Virion</keyword>
<keyword id="KW-0920">Virion tegument</keyword>
<gene>
    <name type="ORF">BKRF4</name>
</gene>
<feature type="chain" id="PRO_0000382444" description="Tegument protein BKRF4">
    <location>
        <begin position="1"/>
        <end position="217"/>
    </location>
</feature>
<feature type="region of interest" description="Disordered" evidence="2">
    <location>
        <begin position="1"/>
        <end position="217"/>
    </location>
</feature>
<feature type="region of interest" description="Interaction with host histones H3/H4" evidence="1">
    <location>
        <begin position="63"/>
        <end position="64"/>
    </location>
</feature>
<feature type="region of interest" description="Interaction with host H2A/H2B" evidence="1">
    <location>
        <begin position="81"/>
        <end position="84"/>
    </location>
</feature>
<feature type="compositionally biased region" description="Polar residues" evidence="2">
    <location>
        <begin position="32"/>
        <end position="42"/>
    </location>
</feature>
<feature type="compositionally biased region" description="Acidic residues" evidence="2">
    <location>
        <begin position="43"/>
        <end position="79"/>
    </location>
</feature>
<feature type="compositionally biased region" description="Acidic residues" evidence="2">
    <location>
        <begin position="89"/>
        <end position="102"/>
    </location>
</feature>
<feature type="compositionally biased region" description="Low complexity" evidence="2">
    <location>
        <begin position="106"/>
        <end position="132"/>
    </location>
</feature>
<feature type="compositionally biased region" description="Pro residues" evidence="2">
    <location>
        <begin position="136"/>
        <end position="145"/>
    </location>
</feature>
<feature type="compositionally biased region" description="Polar residues" evidence="2">
    <location>
        <begin position="208"/>
        <end position="217"/>
    </location>
</feature>
<evidence type="ECO:0000250" key="1">
    <source>
        <dbReference type="UniProtKB" id="P30117"/>
    </source>
</evidence>
<evidence type="ECO:0000256" key="2">
    <source>
        <dbReference type="SAM" id="MobiDB-lite"/>
    </source>
</evidence>
<evidence type="ECO:0000305" key="3"/>